<accession>Q0WML3</accession>
<organism>
    <name type="scientific">Arabidopsis thaliana</name>
    <name type="common">Mouse-ear cress</name>
    <dbReference type="NCBI Taxonomy" id="3702"/>
    <lineage>
        <taxon>Eukaryota</taxon>
        <taxon>Viridiplantae</taxon>
        <taxon>Streptophyta</taxon>
        <taxon>Embryophyta</taxon>
        <taxon>Tracheophyta</taxon>
        <taxon>Spermatophyta</taxon>
        <taxon>Magnoliopsida</taxon>
        <taxon>eudicotyledons</taxon>
        <taxon>Gunneridae</taxon>
        <taxon>Pentapetalae</taxon>
        <taxon>rosids</taxon>
        <taxon>malvids</taxon>
        <taxon>Brassicales</taxon>
        <taxon>Brassicaceae</taxon>
        <taxon>Camelineae</taxon>
        <taxon>Arabidopsis</taxon>
    </lineage>
</organism>
<keyword id="KW-0052">Apoplast</keyword>
<keyword id="KW-1003">Cell membrane</keyword>
<keyword id="KW-0165">Cleavage on pair of basic residues</keyword>
<keyword id="KW-0472">Membrane</keyword>
<keyword id="KW-1185">Reference proteome</keyword>
<keyword id="KW-0677">Repeat</keyword>
<keyword id="KW-0964">Secreted</keyword>
<keyword id="KW-0732">Signal</keyword>
<dbReference type="EMBL" id="AB024024">
    <property type="status" value="NOT_ANNOTATED_CDS"/>
    <property type="molecule type" value="Genomic_DNA"/>
</dbReference>
<dbReference type="EMBL" id="CP002688">
    <property type="protein sequence ID" value="AED95129.1"/>
    <property type="molecule type" value="Genomic_DNA"/>
</dbReference>
<dbReference type="EMBL" id="AK229806">
    <property type="protein sequence ID" value="BAF01637.1"/>
    <property type="molecule type" value="mRNA"/>
</dbReference>
<dbReference type="RefSeq" id="NP_001078711.1">
    <property type="nucleotide sequence ID" value="NM_001085242.2"/>
</dbReference>
<dbReference type="PaxDb" id="3702-AT5G44572.1"/>
<dbReference type="EnsemblPlants" id="AT5G44572.1">
    <property type="protein sequence ID" value="AT5G44572.1"/>
    <property type="gene ID" value="AT5G44572"/>
</dbReference>
<dbReference type="GeneID" id="5008298"/>
<dbReference type="Gramene" id="AT5G44572.1">
    <property type="protein sequence ID" value="AT5G44572.1"/>
    <property type="gene ID" value="AT5G44572"/>
</dbReference>
<dbReference type="KEGG" id="ath:AT5G44572"/>
<dbReference type="Araport" id="AT5G44572"/>
<dbReference type="TAIR" id="AT5G44572"/>
<dbReference type="HOGENOM" id="CLU_2402689_0_0_1"/>
<dbReference type="InParanoid" id="Q0WML3"/>
<dbReference type="OMA" id="MGIYMPN"/>
<dbReference type="PRO" id="PR:Q0WML3"/>
<dbReference type="Proteomes" id="UP000006548">
    <property type="component" value="Chromosome 5"/>
</dbReference>
<dbReference type="ExpressionAtlas" id="Q0WML3">
    <property type="expression patterns" value="baseline and differential"/>
</dbReference>
<dbReference type="GO" id="GO:0048046">
    <property type="term" value="C:apoplast"/>
    <property type="evidence" value="ECO:0000250"/>
    <property type="project" value="UniProtKB"/>
</dbReference>
<dbReference type="GO" id="GO:0005886">
    <property type="term" value="C:plasma membrane"/>
    <property type="evidence" value="ECO:0007669"/>
    <property type="project" value="UniProtKB-SubCell"/>
</dbReference>
<dbReference type="GO" id="GO:0030275">
    <property type="term" value="F:LRR domain binding"/>
    <property type="evidence" value="ECO:0000250"/>
    <property type="project" value="UniProtKB"/>
</dbReference>
<dbReference type="GO" id="GO:0033612">
    <property type="term" value="F:receptor serine/threonine kinase binding"/>
    <property type="evidence" value="ECO:0000250"/>
    <property type="project" value="UniProtKB"/>
</dbReference>
<dbReference type="GO" id="GO:0080027">
    <property type="term" value="P:response to herbivore"/>
    <property type="evidence" value="ECO:0000270"/>
    <property type="project" value="UniProtKB"/>
</dbReference>
<dbReference type="GO" id="GO:0009625">
    <property type="term" value="P:response to insect"/>
    <property type="evidence" value="ECO:0000270"/>
    <property type="project" value="UniProtKB"/>
</dbReference>
<dbReference type="GO" id="GO:0009611">
    <property type="term" value="P:response to wounding"/>
    <property type="evidence" value="ECO:0000270"/>
    <property type="project" value="UniProtKB"/>
</dbReference>
<feature type="signal peptide" evidence="2">
    <location>
        <begin position="1"/>
        <end position="27"/>
    </location>
</feature>
<feature type="propeptide" id="PRO_0000457224" description="Removed in mature form" evidence="1">
    <location>
        <begin position="28"/>
        <end status="unknown"/>
    </location>
</feature>
<feature type="peptide" id="PRO_0000457225" description="Serine rich endogenous peptide 6" evidence="1">
    <location>
        <begin status="unknown"/>
        <end position="93"/>
    </location>
</feature>
<feature type="region of interest" description="Disordered" evidence="3">
    <location>
        <begin position="52"/>
        <end position="93"/>
    </location>
</feature>
<feature type="short sequence motif" description="SCOOP motif 1" evidence="10">
    <location>
        <begin position="48"/>
        <end position="62"/>
    </location>
</feature>
<feature type="short sequence motif" description="SxS motif essential for MIK2 binding" evidence="1">
    <location>
        <begin position="54"/>
        <end position="56"/>
    </location>
</feature>
<feature type="short sequence motif" description="SCOOP motif 2" evidence="10">
    <location>
        <begin position="73"/>
        <end position="87"/>
    </location>
</feature>
<feature type="short sequence motif" description="SxS motif essential for MIK2 binding" evidence="1">
    <location>
        <begin position="79"/>
        <end position="81"/>
    </location>
</feature>
<feature type="compositionally biased region" description="Polar residues" evidence="3">
    <location>
        <begin position="53"/>
        <end position="66"/>
    </location>
</feature>
<sequence>MGTKCYSKLRYVVVLVLLLFVFPCSLSQSAPSSVTGRRLMGIYMPNGGIIAGSSPSGQAPNINNNYHGRRLMISEARPSKSKKGGGREPESPG</sequence>
<evidence type="ECO:0000250" key="1">
    <source>
        <dbReference type="UniProtKB" id="B3H7I1"/>
    </source>
</evidence>
<evidence type="ECO:0000255" key="2"/>
<evidence type="ECO:0000256" key="3">
    <source>
        <dbReference type="SAM" id="MobiDB-lite"/>
    </source>
</evidence>
<evidence type="ECO:0000269" key="4">
    <source>
    </source>
</evidence>
<evidence type="ECO:0000269" key="5">
    <source>
    </source>
</evidence>
<evidence type="ECO:0000269" key="6">
    <source>
    </source>
</evidence>
<evidence type="ECO:0000303" key="7">
    <source>
    </source>
</evidence>
<evidence type="ECO:0000303" key="8">
    <source>
    </source>
</evidence>
<evidence type="ECO:0000305" key="9"/>
<evidence type="ECO:0000305" key="10">
    <source>
    </source>
</evidence>
<evidence type="ECO:0000312" key="11">
    <source>
        <dbReference type="Araport" id="AT5G44572"/>
    </source>
</evidence>
<evidence type="ECO:0000312" key="12">
    <source>
        <dbReference type="EMBL" id="AB024024"/>
    </source>
</evidence>
<protein>
    <recommendedName>
        <fullName evidence="7 8">Serine rich endogenous peptide 6</fullName>
        <shortName evidence="7 8">AtSCOOP6</shortName>
    </recommendedName>
    <alternativeName>
        <fullName evidence="7 8">Phytocytokine SCOOP6</fullName>
    </alternativeName>
    <alternativeName>
        <fullName evidence="7 8">Precursor of serine rich endogenous peptide phytocytokine 6</fullName>
    </alternativeName>
</protein>
<comment type="function">
    <text evidence="4 5">Brassicaceae-specific phytocytokine (plant endogenous peptide released into the apoplast) perceived by MIK2 in a BAK1/SERK3 and SERK4 coreceptors-dependent manner, that modulates various physiological and antimicrobial processes including growth prevention and reactive oxygen species (ROS) response regulation (PubMed:33514716, PubMed:34535661). Inhibits root growth (PubMed:34535661).</text>
</comment>
<comment type="subunit">
    <text evidence="1">Interacts with MIK2 (via extracellular leucine-rich repeat domain); this interaction triggers the formation of complex between MIK2 and the BAK1/SERK3 and SERK4 coreceptors, and subsequent BAK1 activation by phosphorylation.</text>
</comment>
<comment type="subcellular location">
    <subcellularLocation>
        <location evidence="1">Cell membrane</location>
    </subcellularLocation>
    <subcellularLocation>
        <location evidence="1">Secreted</location>
        <location evidence="1">Extracellular space</location>
        <location evidence="1">Apoplast</location>
    </subcellularLocation>
    <text evidence="1">The precursor of SCOOP6, PROSCOOP6, accumulates at the plasma membrane and is proteolytically cleaved to release the SCOOP6 in the apoplasm.</text>
</comment>
<comment type="tissue specificity">
    <text evidence="5">Mostly expressed in seedlings shoots, and, to a lower extent, in roots.</text>
</comment>
<comment type="induction">
    <text evidence="6">Accumulates upon infection by generalist herbivores such as Spodoptera littoralis (PubMed:35401621). Induced by wounding (PubMed:35401621).</text>
</comment>
<comment type="similarity">
    <text evidence="9">Belongs to the serine rich endogenous peptide (SCOOP) phytocytokine family.</text>
</comment>
<name>SCOP6_ARATH</name>
<gene>
    <name evidence="7 8" type="primary">PROSCOOP6</name>
    <name evidence="7 8" type="synonym">SCOOP6</name>
    <name evidence="11" type="ordered locus">At5g44572</name>
    <name evidence="12" type="ORF">K15C23</name>
</gene>
<proteinExistence type="evidence at transcript level"/>
<reference key="1">
    <citation type="submission" date="1999-02" db="EMBL/GenBank/DDBJ databases">
        <title>Structural analysis of Arabidopsis thaliana chromosome 5. XI.</title>
        <authorList>
            <person name="Kaneko T."/>
            <person name="Katoh T."/>
            <person name="Asamizu E."/>
            <person name="Sato S."/>
            <person name="Nakamura Y."/>
            <person name="Kotani H."/>
            <person name="Tabata S."/>
        </authorList>
    </citation>
    <scope>NUCLEOTIDE SEQUENCE [LARGE SCALE GENOMIC DNA]</scope>
    <source>
        <strain>cv. Columbia</strain>
    </source>
</reference>
<reference key="2">
    <citation type="journal article" date="2017" name="Plant J.">
        <title>Araport11: a complete reannotation of the Arabidopsis thaliana reference genome.</title>
        <authorList>
            <person name="Cheng C.Y."/>
            <person name="Krishnakumar V."/>
            <person name="Chan A.P."/>
            <person name="Thibaud-Nissen F."/>
            <person name="Schobel S."/>
            <person name="Town C.D."/>
        </authorList>
    </citation>
    <scope>GENOME REANNOTATION</scope>
    <source>
        <strain>cv. Columbia</strain>
    </source>
</reference>
<reference key="3">
    <citation type="submission" date="2006-07" db="EMBL/GenBank/DDBJ databases">
        <title>Large-scale analysis of RIKEN Arabidopsis full-length (RAFL) cDNAs.</title>
        <authorList>
            <person name="Totoki Y."/>
            <person name="Seki M."/>
            <person name="Ishida J."/>
            <person name="Nakajima M."/>
            <person name="Enju A."/>
            <person name="Kamiya A."/>
            <person name="Narusaka M."/>
            <person name="Shin-i T."/>
            <person name="Nakagawa M."/>
            <person name="Sakamoto N."/>
            <person name="Oishi K."/>
            <person name="Kohara Y."/>
            <person name="Kobayashi M."/>
            <person name="Toyoda A."/>
            <person name="Sakaki Y."/>
            <person name="Sakurai T."/>
            <person name="Iida K."/>
            <person name="Akiyama K."/>
            <person name="Satou M."/>
            <person name="Toyoda T."/>
            <person name="Konagaya A."/>
            <person name="Carninci P."/>
            <person name="Kawai J."/>
            <person name="Hayashizaki Y."/>
            <person name="Shinozaki K."/>
        </authorList>
    </citation>
    <scope>NUCLEOTIDE SEQUENCE [LARGE SCALE MRNA]</scope>
    <source>
        <strain>cv. Columbia</strain>
    </source>
</reference>
<reference key="4">
    <citation type="journal article" date="2019" name="J. Exp. Bot.">
        <title>The SCOOP12 peptide regulates defense response and root elongation in Arabidopsis thaliana.</title>
        <authorList>
            <person name="Gully K."/>
            <person name="Pelletier S."/>
            <person name="Guillou M.-C."/>
            <person name="Ferrand M."/>
            <person name="Aligon S."/>
            <person name="Pokotylo I."/>
            <person name="Perrin A."/>
            <person name="Vergne E."/>
            <person name="Fagard M."/>
            <person name="Ruelland E."/>
            <person name="Grappin P."/>
            <person name="Bucher E."/>
            <person name="Renou J.-P."/>
            <person name="Aubourg S."/>
        </authorList>
    </citation>
    <scope>GENE FAMILY</scope>
    <source>
        <strain>cv. Columbia</strain>
        <strain>cv. Wassilewskija</strain>
    </source>
</reference>
<reference key="5">
    <citation type="journal article" date="2021" name="Nat. Commun.">
        <title>Perception of a divergent family of phytocytokines by the Arabidopsis receptor kinase MIK2.</title>
        <authorList>
            <person name="Rhodes J."/>
            <person name="Yang H."/>
            <person name="Moussu S."/>
            <person name="Boutrot F."/>
            <person name="Santiago J."/>
            <person name="Zipfel C."/>
        </authorList>
    </citation>
    <scope>FUNCTION</scope>
    <scope>GENE FAMILY</scope>
    <source>
        <strain>cv. Columbia</strain>
        <strain>cv. Wassilewskija-2</strain>
    </source>
</reference>
<reference key="6">
    <citation type="journal article" date="2021" name="Nat. Commun.">
        <title>The Arabidopsis MIK2 receptor elicits immunity by sensing a conserved signature from phytocytokines and microbes.</title>
        <authorList>
            <person name="Hou S."/>
            <person name="Liu D."/>
            <person name="Huang S."/>
            <person name="Luo D."/>
            <person name="Liu Z."/>
            <person name="Xiang Q."/>
            <person name="Wang P."/>
            <person name="Mu R."/>
            <person name="Han Z."/>
            <person name="Chen S."/>
            <person name="Chai J."/>
            <person name="Shan L."/>
            <person name="He P."/>
        </authorList>
    </citation>
    <scope>FUNCTION</scope>
    <scope>TISSUE SPECIFICITY</scope>
    <scope>GENE FAMILY</scope>
    <scope>NOMENCLATURE</scope>
    <source>
        <strain>cv. Columbia</strain>
    </source>
</reference>
<reference key="7">
    <citation type="journal article" date="2022" name="Front. Plant Sci.">
        <title>The MIK2/SCOOP signaling system contributes to Arabidopsis resistance against herbivory by modulating jasmonate and indole glucosinolate biosynthesis.</title>
        <authorList>
            <person name="Stahl E."/>
            <person name="Fernandez Martin A."/>
            <person name="Glauser G."/>
            <person name="Guillou M.-C."/>
            <person name="Aubourg S."/>
            <person name="Renou J.-P."/>
            <person name="Reymond P."/>
        </authorList>
    </citation>
    <scope>INDUCTION BY INSECT HERBIVORY AND WOUNDING</scope>
    <source>
        <strain>cv. Columbia</strain>
        <strain>cv. Wassilewskija</strain>
    </source>
</reference>